<gene>
    <name type="primary">npy</name>
</gene>
<keyword id="KW-0027">Amidation</keyword>
<keyword id="KW-0165">Cleavage on pair of basic residues</keyword>
<keyword id="KW-0527">Neuropeptide</keyword>
<keyword id="KW-0964">Secreted</keyword>
<keyword id="KW-0732">Signal</keyword>
<organism>
    <name type="scientific">Ictalurus punctatus</name>
    <name type="common">Channel catfish</name>
    <name type="synonym">Silurus punctatus</name>
    <dbReference type="NCBI Taxonomy" id="7998"/>
    <lineage>
        <taxon>Eukaryota</taxon>
        <taxon>Metazoa</taxon>
        <taxon>Chordata</taxon>
        <taxon>Craniata</taxon>
        <taxon>Vertebrata</taxon>
        <taxon>Euteleostomi</taxon>
        <taxon>Actinopterygii</taxon>
        <taxon>Neopterygii</taxon>
        <taxon>Teleostei</taxon>
        <taxon>Ostariophysi</taxon>
        <taxon>Siluriformes</taxon>
        <taxon>Ictaluridae</taxon>
        <taxon>Ictalurus</taxon>
    </lineage>
</organism>
<reference key="1">
    <citation type="submission" date="2000-05" db="EMBL/GenBank/DDBJ databases">
        <title>Neuropeptide Y (NPY) sequence and distribution in channel catfish (Ictalurus punctatus).</title>
        <authorList>
            <person name="Leonard J.B.K."/>
            <person name="Waldbieser G.C."/>
            <person name="Silverstein J.T."/>
        </authorList>
    </citation>
    <scope>NUCLEOTIDE SEQUENCE [MRNA]</scope>
    <source>
        <tissue>Brain</tissue>
    </source>
</reference>
<proteinExistence type="inferred from homology"/>
<dbReference type="EMBL" id="AF267164">
    <property type="protein sequence ID" value="AAF71617.1"/>
    <property type="molecule type" value="mRNA"/>
</dbReference>
<dbReference type="RefSeq" id="NP_001187016.1">
    <property type="nucleotide sequence ID" value="NM_001200087.1"/>
</dbReference>
<dbReference type="STRING" id="7998.ENSIPUP00000009019"/>
<dbReference type="GeneID" id="100304501"/>
<dbReference type="KEGG" id="ipu:100304501"/>
<dbReference type="CTD" id="4852"/>
<dbReference type="OrthoDB" id="9852947at2759"/>
<dbReference type="Proteomes" id="UP000221080">
    <property type="component" value="Chromosome 12"/>
</dbReference>
<dbReference type="GO" id="GO:0005615">
    <property type="term" value="C:extracellular space"/>
    <property type="evidence" value="ECO:0007669"/>
    <property type="project" value="TreeGrafter"/>
</dbReference>
<dbReference type="GO" id="GO:0005184">
    <property type="term" value="F:neuropeptide hormone activity"/>
    <property type="evidence" value="ECO:0007669"/>
    <property type="project" value="TreeGrafter"/>
</dbReference>
<dbReference type="GO" id="GO:0031841">
    <property type="term" value="F:neuropeptide Y receptor binding"/>
    <property type="evidence" value="ECO:0007669"/>
    <property type="project" value="TreeGrafter"/>
</dbReference>
<dbReference type="GO" id="GO:0007631">
    <property type="term" value="P:feeding behavior"/>
    <property type="evidence" value="ECO:0007669"/>
    <property type="project" value="TreeGrafter"/>
</dbReference>
<dbReference type="GO" id="GO:0007218">
    <property type="term" value="P:neuropeptide signaling pathway"/>
    <property type="evidence" value="ECO:0007669"/>
    <property type="project" value="UniProtKB-KW"/>
</dbReference>
<dbReference type="CDD" id="cd00126">
    <property type="entry name" value="PAH"/>
    <property type="match status" value="1"/>
</dbReference>
<dbReference type="Gene3D" id="6.10.250.900">
    <property type="match status" value="1"/>
</dbReference>
<dbReference type="InterPro" id="IPR001955">
    <property type="entry name" value="Pancreatic_hormone-like"/>
</dbReference>
<dbReference type="InterPro" id="IPR020392">
    <property type="entry name" value="Pancreatic_hormone-like_CS"/>
</dbReference>
<dbReference type="PANTHER" id="PTHR10533">
    <property type="entry name" value="NEUROPEPTIDE Y/PANCREATIC HORMONE/PEPTIDE YY"/>
    <property type="match status" value="1"/>
</dbReference>
<dbReference type="PANTHER" id="PTHR10533:SF5">
    <property type="entry name" value="PRO-NEUROPEPTIDE Y"/>
    <property type="match status" value="1"/>
</dbReference>
<dbReference type="Pfam" id="PF00159">
    <property type="entry name" value="Hormone_3"/>
    <property type="match status" value="1"/>
</dbReference>
<dbReference type="PRINTS" id="PR00278">
    <property type="entry name" value="PANCHORMONE"/>
</dbReference>
<dbReference type="SMART" id="SM00309">
    <property type="entry name" value="PAH"/>
    <property type="match status" value="1"/>
</dbReference>
<dbReference type="PROSITE" id="PS00265">
    <property type="entry name" value="PANCREATIC_HORMONE_1"/>
    <property type="match status" value="1"/>
</dbReference>
<dbReference type="PROSITE" id="PS50276">
    <property type="entry name" value="PANCREATIC_HORMONE_2"/>
    <property type="match status" value="1"/>
</dbReference>
<protein>
    <recommendedName>
        <fullName>Pro-neuropeptide Y</fullName>
    </recommendedName>
    <component>
        <recommendedName>
            <fullName>Neuropeptide Y</fullName>
        </recommendedName>
        <alternativeName>
            <fullName>Neuropeptide tyrosine</fullName>
            <shortName>NPY</shortName>
        </alternativeName>
    </component>
    <component>
        <recommendedName>
            <fullName>C-flanking peptide of NPY</fullName>
            <shortName>CPON</shortName>
        </recommendedName>
    </component>
</protein>
<feature type="signal peptide" evidence="1">
    <location>
        <begin position="1"/>
        <end position="27"/>
    </location>
</feature>
<feature type="peptide" id="PRO_0000025343" description="Neuropeptide Y">
    <location>
        <begin position="28"/>
        <end position="63"/>
    </location>
</feature>
<feature type="peptide" id="PRO_0000025344" description="C-flanking peptide of NPY">
    <location>
        <begin position="67"/>
        <end position="95"/>
    </location>
</feature>
<feature type="modified residue" description="Tyrosine amide" evidence="1">
    <location>
        <position position="63"/>
    </location>
</feature>
<comment type="function">
    <text>NPY is implicated in the control of feeding and in secretion of gonadotrophin-release hormone.</text>
</comment>
<comment type="subcellular location">
    <subcellularLocation>
        <location>Secreted</location>
    </subcellularLocation>
</comment>
<comment type="similarity">
    <text evidence="2">Belongs to the NPY family.</text>
</comment>
<accession>Q9I9D3</accession>
<sequence>MRPRANVCVGWAACILLVVCLCVLAEGYPTKPENPGEDAPVEELAKYYSALRHYINLITRQRYGKRSNTDVLTPDLLFGEAEIRLQSRYDDPLMG</sequence>
<evidence type="ECO:0000250" key="1"/>
<evidence type="ECO:0000305" key="2"/>
<name>NPY_ICTPU</name>